<protein>
    <recommendedName>
        <fullName evidence="1">Peptide chain release factor 2</fullName>
        <shortName evidence="1">RF-2</shortName>
    </recommendedName>
</protein>
<organism>
    <name type="scientific">Escherichia coli (strain ATCC 8739 / DSM 1576 / NBRC 3972 / NCIMB 8545 / WDCM 00012 / Crooks)</name>
    <dbReference type="NCBI Taxonomy" id="481805"/>
    <lineage>
        <taxon>Bacteria</taxon>
        <taxon>Pseudomonadati</taxon>
        <taxon>Pseudomonadota</taxon>
        <taxon>Gammaproteobacteria</taxon>
        <taxon>Enterobacterales</taxon>
        <taxon>Enterobacteriaceae</taxon>
        <taxon>Escherichia</taxon>
    </lineage>
</organism>
<dbReference type="EMBL" id="CP000946">
    <property type="protein sequence ID" value="ACA76490.1"/>
    <property type="molecule type" value="Genomic_DNA"/>
</dbReference>
<dbReference type="RefSeq" id="WP_001701073.1">
    <property type="nucleotide sequence ID" value="NZ_MTFT01000004.1"/>
</dbReference>
<dbReference type="SMR" id="B1ITB1"/>
<dbReference type="GeneID" id="93779111"/>
<dbReference type="KEGG" id="ecl:EcolC_0818"/>
<dbReference type="HOGENOM" id="CLU_220733_1_0_6"/>
<dbReference type="GO" id="GO:0005737">
    <property type="term" value="C:cytoplasm"/>
    <property type="evidence" value="ECO:0007669"/>
    <property type="project" value="UniProtKB-SubCell"/>
</dbReference>
<dbReference type="GO" id="GO:0016149">
    <property type="term" value="F:translation release factor activity, codon specific"/>
    <property type="evidence" value="ECO:0007669"/>
    <property type="project" value="UniProtKB-UniRule"/>
</dbReference>
<dbReference type="FunFam" id="1.20.58.410:FF:000001">
    <property type="entry name" value="Peptide chain release factor 2"/>
    <property type="match status" value="1"/>
</dbReference>
<dbReference type="FunFam" id="3.30.160.20:FF:000010">
    <property type="entry name" value="Peptide chain release factor 2"/>
    <property type="match status" value="1"/>
</dbReference>
<dbReference type="Gene3D" id="3.30.160.20">
    <property type="match status" value="1"/>
</dbReference>
<dbReference type="Gene3D" id="3.30.70.1660">
    <property type="match status" value="1"/>
</dbReference>
<dbReference type="Gene3D" id="1.20.58.410">
    <property type="entry name" value="Release factor"/>
    <property type="match status" value="1"/>
</dbReference>
<dbReference type="HAMAP" id="MF_00094">
    <property type="entry name" value="Rel_fac_2"/>
    <property type="match status" value="1"/>
</dbReference>
<dbReference type="InterPro" id="IPR005139">
    <property type="entry name" value="PCRF"/>
</dbReference>
<dbReference type="InterPro" id="IPR000352">
    <property type="entry name" value="Pep_chain_release_fac_I"/>
</dbReference>
<dbReference type="InterPro" id="IPR045853">
    <property type="entry name" value="Pep_chain_release_fac_I_sf"/>
</dbReference>
<dbReference type="InterPro" id="IPR004374">
    <property type="entry name" value="PrfB"/>
</dbReference>
<dbReference type="NCBIfam" id="TIGR00020">
    <property type="entry name" value="prfB"/>
    <property type="match status" value="1"/>
</dbReference>
<dbReference type="PANTHER" id="PTHR43116:SF3">
    <property type="entry name" value="CLASS I PEPTIDE CHAIN RELEASE FACTOR"/>
    <property type="match status" value="1"/>
</dbReference>
<dbReference type="PANTHER" id="PTHR43116">
    <property type="entry name" value="PEPTIDE CHAIN RELEASE FACTOR 2"/>
    <property type="match status" value="1"/>
</dbReference>
<dbReference type="Pfam" id="PF03462">
    <property type="entry name" value="PCRF"/>
    <property type="match status" value="1"/>
</dbReference>
<dbReference type="Pfam" id="PF00472">
    <property type="entry name" value="RF-1"/>
    <property type="match status" value="1"/>
</dbReference>
<dbReference type="SMART" id="SM00937">
    <property type="entry name" value="PCRF"/>
    <property type="match status" value="1"/>
</dbReference>
<dbReference type="SUPFAM" id="SSF75620">
    <property type="entry name" value="Release factor"/>
    <property type="match status" value="1"/>
</dbReference>
<dbReference type="PROSITE" id="PS00745">
    <property type="entry name" value="RF_PROK_I"/>
    <property type="match status" value="1"/>
</dbReference>
<feature type="chain" id="PRO_1000075524" description="Peptide chain release factor 2">
    <location>
        <begin position="1"/>
        <end position="365"/>
    </location>
</feature>
<feature type="modified residue" description="N5-methylglutamine" evidence="1">
    <location>
        <position position="252"/>
    </location>
</feature>
<reference key="1">
    <citation type="submission" date="2008-02" db="EMBL/GenBank/DDBJ databases">
        <title>Complete sequence of Escherichia coli C str. ATCC 8739.</title>
        <authorList>
            <person name="Copeland A."/>
            <person name="Lucas S."/>
            <person name="Lapidus A."/>
            <person name="Glavina del Rio T."/>
            <person name="Dalin E."/>
            <person name="Tice H."/>
            <person name="Bruce D."/>
            <person name="Goodwin L."/>
            <person name="Pitluck S."/>
            <person name="Kiss H."/>
            <person name="Brettin T."/>
            <person name="Detter J.C."/>
            <person name="Han C."/>
            <person name="Kuske C.R."/>
            <person name="Schmutz J."/>
            <person name="Larimer F."/>
            <person name="Land M."/>
            <person name="Hauser L."/>
            <person name="Kyrpides N."/>
            <person name="Mikhailova N."/>
            <person name="Ingram L."/>
            <person name="Richardson P."/>
        </authorList>
    </citation>
    <scope>NUCLEOTIDE SEQUENCE [LARGE SCALE GENOMIC DNA]</scope>
    <source>
        <strain>ATCC 8739 / DSM 1576 / NBRC 3972 / NCIMB 8545 / WDCM 00012 / Crooks</strain>
    </source>
</reference>
<sequence>MFEINPVNNRIQDLTERSDVLRGYLDYDAKKERLEEVNAELEQPDVWNEPERAQALGKERSSLEAVVDTLDQMKQGLEDVSGLLELAVEADDEETFNEAVAELDALEEKLAQLEFRRMFSGEYDSADCYLDIQAGSGGTEAQDWASMLERMYLRWAESRGFKTEIIEESEGEVAGIKSVTIKISGDYAYGWLRTETGVHRLVRKSPFDSGGRRHTSFSSAFVYPEVDDDIDIEINPADLRIDVYRASGAGGQHVNRTESAVRITHIPTGIVTQCQNDRSQHKNKDQAMKQMKAKLYELEMQKKNAEKQAMEDNKSDIGWGSQIRSYVLDDSRIKDLRTGVETRNTQAVLDGSLDQFIEASLKAGL</sequence>
<name>RF2_ECOLC</name>
<keyword id="KW-0963">Cytoplasm</keyword>
<keyword id="KW-0488">Methylation</keyword>
<keyword id="KW-0648">Protein biosynthesis</keyword>
<gene>
    <name evidence="1" type="primary">prfB</name>
    <name type="ordered locus">EcolC_0818</name>
</gene>
<evidence type="ECO:0000255" key="1">
    <source>
        <dbReference type="HAMAP-Rule" id="MF_00094"/>
    </source>
</evidence>
<proteinExistence type="inferred from homology"/>
<comment type="function">
    <text evidence="1">Peptide chain release factor 2 directs the termination of translation in response to the peptide chain termination codons UGA and UAA.</text>
</comment>
<comment type="subcellular location">
    <subcellularLocation>
        <location evidence="1">Cytoplasm</location>
    </subcellularLocation>
</comment>
<comment type="PTM">
    <text evidence="1">Methylated by PrmC. Methylation increases the termination efficiency of RF2.</text>
</comment>
<comment type="similarity">
    <text evidence="1">Belongs to the prokaryotic/mitochondrial release factor family.</text>
</comment>
<accession>B1ITB1</accession>